<proteinExistence type="inferred from homology"/>
<sequence length="203" mass="22693">MECPKEIVLLMHSYFDGDLQPEGEQQLKEHLRSCAACAAHFHELKKTVAFLQYAAHVAAPPSFAAKVMEAMPKERKTARLRRFLHRHPLLTAASLFLALTLGSLASSWGERGAFSVSADEHVIIRDHTVIVPKGETVKGDIVVRNGSIRIEGTVDGDVTVIHGKKYMASAGQVTGEVEEINQVFEWIWYNIKERFNRALQSIE</sequence>
<organism>
    <name type="scientific">Geobacillus kaustophilus (strain HTA426)</name>
    <dbReference type="NCBI Taxonomy" id="235909"/>
    <lineage>
        <taxon>Bacteria</taxon>
        <taxon>Bacillati</taxon>
        <taxon>Bacillota</taxon>
        <taxon>Bacilli</taxon>
        <taxon>Bacillales</taxon>
        <taxon>Anoxybacillaceae</taxon>
        <taxon>Geobacillus</taxon>
        <taxon>Geobacillus thermoleovorans group</taxon>
    </lineage>
</organism>
<gene>
    <name type="primary">rsiW</name>
    <name type="ordered locus">GK0151</name>
</gene>
<evidence type="ECO:0000250" key="1"/>
<evidence type="ECO:0000255" key="2"/>
<evidence type="ECO:0000305" key="3"/>
<protein>
    <recommendedName>
        <fullName>Anti-sigma-W factor RsiW</fullName>
    </recommendedName>
</protein>
<accession>Q5L3P4</accession>
<reference key="1">
    <citation type="journal article" date="2004" name="Nucleic Acids Res.">
        <title>Thermoadaptation trait revealed by the genome sequence of thermophilic Geobacillus kaustophilus.</title>
        <authorList>
            <person name="Takami H."/>
            <person name="Takaki Y."/>
            <person name="Chee G.-J."/>
            <person name="Nishi S."/>
            <person name="Shimamura S."/>
            <person name="Suzuki H."/>
            <person name="Matsui S."/>
            <person name="Uchiyama I."/>
        </authorList>
    </citation>
    <scope>NUCLEOTIDE SEQUENCE [LARGE SCALE GENOMIC DNA]</scope>
    <source>
        <strain>HTA426</strain>
    </source>
</reference>
<comment type="function">
    <text evidence="1">Is the anti-sigma factor for SigW. The presence of RsiW leads to the inactivation of SigW, and its proteolytic destruction to sigma-W activation (By similarity).</text>
</comment>
<comment type="cofactor">
    <cofactor evidence="1">
        <name>Zn(2+)</name>
        <dbReference type="ChEBI" id="CHEBI:29105"/>
    </cofactor>
    <text evidence="1">Binds 1 Zn(2+) ion per subunit.</text>
</comment>
<comment type="subcellular location">
    <subcellularLocation>
        <location>Membrane</location>
        <topology>Single-pass membrane protein</topology>
    </subcellularLocation>
    <text evidence="1">Site-2 clipped RsiW is released from the membrane to the cytoplasm.</text>
</comment>
<comment type="PTM">
    <text evidence="1">Is processed by three successive proteolytic events. First, the extracellular region of RsiW is cleaved by PrsW (Site-1 cleavage) in response to cell envelope stresses. Next, it undergoes cleavage at an intramembrane site (Site-2 cleavage) mediated by RasP. This cleavage uncovers a cryptic proteolytic tag with conserved alanine residues in the transmembrane segment, that is recognized mainly by the ClpXP protease, which completely degrades the protein in the cytoplasm and leads to the induction of the sigma-W-controlled genes (By similarity).</text>
</comment>
<comment type="similarity">
    <text evidence="3">Belongs to the zinc-associated anti-sigma factor (ZAS) superfamily. Anti-sigma-W factor family.</text>
</comment>
<name>RSIW_GEOKA</name>
<dbReference type="EMBL" id="BA000043">
    <property type="protein sequence ID" value="BAD74436.1"/>
    <property type="molecule type" value="Genomic_DNA"/>
</dbReference>
<dbReference type="RefSeq" id="WP_011229663.1">
    <property type="nucleotide sequence ID" value="NC_006510.1"/>
</dbReference>
<dbReference type="SMR" id="Q5L3P4"/>
<dbReference type="STRING" id="235909.GK0151"/>
<dbReference type="GeneID" id="32062149"/>
<dbReference type="KEGG" id="gka:GK0151"/>
<dbReference type="eggNOG" id="COG5662">
    <property type="taxonomic scope" value="Bacteria"/>
</dbReference>
<dbReference type="HOGENOM" id="CLU_1347302_0_0_9"/>
<dbReference type="Proteomes" id="UP000001172">
    <property type="component" value="Chromosome"/>
</dbReference>
<dbReference type="GO" id="GO:0016020">
    <property type="term" value="C:membrane"/>
    <property type="evidence" value="ECO:0007669"/>
    <property type="project" value="UniProtKB-SubCell"/>
</dbReference>
<dbReference type="GO" id="GO:0046872">
    <property type="term" value="F:metal ion binding"/>
    <property type="evidence" value="ECO:0007669"/>
    <property type="project" value="UniProtKB-KW"/>
</dbReference>
<dbReference type="GO" id="GO:0016989">
    <property type="term" value="F:sigma factor antagonist activity"/>
    <property type="evidence" value="ECO:0007669"/>
    <property type="project" value="TreeGrafter"/>
</dbReference>
<dbReference type="GO" id="GO:0006417">
    <property type="term" value="P:regulation of translation"/>
    <property type="evidence" value="ECO:0007669"/>
    <property type="project" value="TreeGrafter"/>
</dbReference>
<dbReference type="Gene3D" id="1.10.10.1320">
    <property type="entry name" value="Anti-sigma factor, zinc-finger domain"/>
    <property type="match status" value="1"/>
</dbReference>
<dbReference type="InterPro" id="IPR051474">
    <property type="entry name" value="Anti-sigma-K/W_factor"/>
</dbReference>
<dbReference type="InterPro" id="IPR041916">
    <property type="entry name" value="Anti_sigma_zinc_sf"/>
</dbReference>
<dbReference type="InterPro" id="IPR027383">
    <property type="entry name" value="Znf_put"/>
</dbReference>
<dbReference type="PANTHER" id="PTHR37461">
    <property type="entry name" value="ANTI-SIGMA-K FACTOR RSKA"/>
    <property type="match status" value="1"/>
</dbReference>
<dbReference type="PANTHER" id="PTHR37461:SF1">
    <property type="entry name" value="ANTI-SIGMA-K FACTOR RSKA"/>
    <property type="match status" value="1"/>
</dbReference>
<dbReference type="Pfam" id="PF13490">
    <property type="entry name" value="zf-HC2"/>
    <property type="match status" value="1"/>
</dbReference>
<keyword id="KW-0472">Membrane</keyword>
<keyword id="KW-0479">Metal-binding</keyword>
<keyword id="KW-1185">Reference proteome</keyword>
<keyword id="KW-0812">Transmembrane</keyword>
<keyword id="KW-1133">Transmembrane helix</keyword>
<keyword id="KW-0862">Zinc</keyword>
<feature type="chain" id="PRO_0000248142" description="Anti-sigma-W factor RsiW">
    <location>
        <begin position="1"/>
        <end position="203"/>
    </location>
</feature>
<feature type="topological domain" description="Cytoplasmic" evidence="2">
    <location>
        <begin position="1"/>
        <end position="86"/>
    </location>
</feature>
<feature type="transmembrane region" description="Helical" evidence="2">
    <location>
        <begin position="87"/>
        <end position="103"/>
    </location>
</feature>
<feature type="topological domain" description="Extracellular" evidence="2">
    <location>
        <begin position="104"/>
        <end position="203"/>
    </location>
</feature>
<feature type="binding site" evidence="1">
    <location>
        <position position="30"/>
    </location>
    <ligand>
        <name>Zn(2+)</name>
        <dbReference type="ChEBI" id="CHEBI:29105"/>
    </ligand>
</feature>
<feature type="binding site" evidence="1">
    <location>
        <position position="34"/>
    </location>
    <ligand>
        <name>Zn(2+)</name>
        <dbReference type="ChEBI" id="CHEBI:29105"/>
    </ligand>
</feature>
<feature type="binding site" evidence="1">
    <location>
        <position position="37"/>
    </location>
    <ligand>
        <name>Zn(2+)</name>
        <dbReference type="ChEBI" id="CHEBI:29105"/>
    </ligand>
</feature>